<evidence type="ECO:0000250" key="1">
    <source>
        <dbReference type="UniProtKB" id="I6S3A5"/>
    </source>
</evidence>
<evidence type="ECO:0000255" key="2"/>
<evidence type="ECO:0000269" key="3">
    <source>
    </source>
</evidence>
<evidence type="ECO:0000305" key="4"/>
<evidence type="ECO:0000305" key="5">
    <source>
    </source>
</evidence>
<evidence type="ECO:0000312" key="6">
    <source>
        <dbReference type="EMBL" id="AFM55020.1"/>
    </source>
</evidence>
<dbReference type="EMBL" id="JQ757073">
    <property type="protein sequence ID" value="AFM55020.1"/>
    <property type="molecule type" value="mRNA"/>
</dbReference>
<dbReference type="SMR" id="I6S7H5"/>
<dbReference type="GO" id="GO:0005576">
    <property type="term" value="C:extracellular region"/>
    <property type="evidence" value="ECO:0007669"/>
    <property type="project" value="UniProtKB-SubCell"/>
</dbReference>
<dbReference type="GO" id="GO:0090729">
    <property type="term" value="F:toxin activity"/>
    <property type="evidence" value="ECO:0007669"/>
    <property type="project" value="UniProtKB-KW"/>
</dbReference>
<keyword id="KW-1015">Disulfide bond</keyword>
<keyword id="KW-0528">Neurotoxin</keyword>
<keyword id="KW-0964">Secreted</keyword>
<keyword id="KW-0732">Signal</keyword>
<keyword id="KW-0800">Toxin</keyword>
<name>PNX31_SCOSU</name>
<protein>
    <recommendedName>
        <fullName evidence="6">Putative neurotoxin 1</fullName>
    </recommendedName>
</protein>
<accession>I6S7H5</accession>
<proteinExistence type="inferred from homology"/>
<reference key="1">
    <citation type="journal article" date="2012" name="Mol. Cell. Proteomics">
        <title>Chemical punch packed in venoms makes centipedes excellent predators.</title>
        <authorList>
            <person name="Yang S."/>
            <person name="Liu Z."/>
            <person name="Xiao Y."/>
            <person name="Li Y."/>
            <person name="Rong M."/>
            <person name="Liang S."/>
            <person name="Zhang Z."/>
            <person name="Yu H."/>
            <person name="King G.F."/>
            <person name="Lai R."/>
        </authorList>
    </citation>
    <scope>NUCLEOTIDE SEQUENCE [MRNA]</scope>
    <source>
        <tissue>Venom gland</tissue>
    </source>
</reference>
<organism>
    <name type="scientific">Scolopendra subspinipes</name>
    <name type="common">Vietnamese centipede</name>
    <dbReference type="NCBI Taxonomy" id="55038"/>
    <lineage>
        <taxon>Eukaryota</taxon>
        <taxon>Metazoa</taxon>
        <taxon>Ecdysozoa</taxon>
        <taxon>Arthropoda</taxon>
        <taxon>Myriapoda</taxon>
        <taxon>Chilopoda</taxon>
        <taxon>Pleurostigmophora</taxon>
        <taxon>Scolopendromorpha</taxon>
        <taxon>Scolopendridae</taxon>
        <taxon>Scolopendra</taxon>
    </lineage>
</organism>
<comment type="subcellular location">
    <subcellularLocation>
        <location evidence="3">Secreted</location>
    </subcellularLocation>
</comment>
<comment type="tissue specificity">
    <text evidence="5">Expressed by the venom gland.</text>
</comment>
<comment type="PTM">
    <text evidence="4">Contains 2 disulfide bonds.</text>
</comment>
<comment type="similarity">
    <text evidence="4">Belongs to the scolopendra neurotoxin 3 family.</text>
</comment>
<feature type="signal peptide" evidence="2">
    <location>
        <begin position="1"/>
        <end position="25"/>
    </location>
</feature>
<feature type="propeptide" id="PRO_0000446685" evidence="1">
    <location>
        <begin position="26"/>
        <end position="46"/>
    </location>
</feature>
<feature type="chain" id="PRO_5003705819" description="Putative neurotoxin 1" evidence="1">
    <location>
        <begin position="47"/>
        <end position="77"/>
    </location>
</feature>
<sequence length="77" mass="8957">MKAFIVILSIAIVLLLIVSIKETSAKDCKQECVKRYTKGDLTNFLKAEYEPKNRGGICYCEFTCHVKFYIYLKHEMD</sequence>